<name>RL22_LEUMM</name>
<gene>
    <name evidence="1" type="primary">rplV</name>
    <name type="ordered locus">LEUM_0201</name>
</gene>
<protein>
    <recommendedName>
        <fullName evidence="1">Large ribosomal subunit protein uL22</fullName>
    </recommendedName>
    <alternativeName>
        <fullName evidence="2">50S ribosomal protein L22</fullName>
    </alternativeName>
</protein>
<keyword id="KW-1185">Reference proteome</keyword>
<keyword id="KW-0687">Ribonucleoprotein</keyword>
<keyword id="KW-0689">Ribosomal protein</keyword>
<keyword id="KW-0694">RNA-binding</keyword>
<keyword id="KW-0699">rRNA-binding</keyword>
<dbReference type="EMBL" id="CP000414">
    <property type="protein sequence ID" value="ABJ61332.1"/>
    <property type="molecule type" value="Genomic_DNA"/>
</dbReference>
<dbReference type="RefSeq" id="WP_002816032.1">
    <property type="nucleotide sequence ID" value="NC_008531.1"/>
</dbReference>
<dbReference type="SMR" id="Q03ZP0"/>
<dbReference type="EnsemblBacteria" id="ABJ61332">
    <property type="protein sequence ID" value="ABJ61332"/>
    <property type="gene ID" value="LEUM_0201"/>
</dbReference>
<dbReference type="GeneID" id="97504976"/>
<dbReference type="KEGG" id="lme:LEUM_0201"/>
<dbReference type="eggNOG" id="COG0091">
    <property type="taxonomic scope" value="Bacteria"/>
</dbReference>
<dbReference type="HOGENOM" id="CLU_083987_3_3_9"/>
<dbReference type="Proteomes" id="UP000000362">
    <property type="component" value="Chromosome"/>
</dbReference>
<dbReference type="GO" id="GO:0022625">
    <property type="term" value="C:cytosolic large ribosomal subunit"/>
    <property type="evidence" value="ECO:0007669"/>
    <property type="project" value="TreeGrafter"/>
</dbReference>
<dbReference type="GO" id="GO:0019843">
    <property type="term" value="F:rRNA binding"/>
    <property type="evidence" value="ECO:0007669"/>
    <property type="project" value="UniProtKB-UniRule"/>
</dbReference>
<dbReference type="GO" id="GO:0003735">
    <property type="term" value="F:structural constituent of ribosome"/>
    <property type="evidence" value="ECO:0007669"/>
    <property type="project" value="InterPro"/>
</dbReference>
<dbReference type="GO" id="GO:0006412">
    <property type="term" value="P:translation"/>
    <property type="evidence" value="ECO:0007669"/>
    <property type="project" value="UniProtKB-UniRule"/>
</dbReference>
<dbReference type="CDD" id="cd00336">
    <property type="entry name" value="Ribosomal_L22"/>
    <property type="match status" value="1"/>
</dbReference>
<dbReference type="Gene3D" id="3.90.470.10">
    <property type="entry name" value="Ribosomal protein L22/L17"/>
    <property type="match status" value="1"/>
</dbReference>
<dbReference type="HAMAP" id="MF_01331_B">
    <property type="entry name" value="Ribosomal_uL22_B"/>
    <property type="match status" value="1"/>
</dbReference>
<dbReference type="InterPro" id="IPR001063">
    <property type="entry name" value="Ribosomal_uL22"/>
</dbReference>
<dbReference type="InterPro" id="IPR005727">
    <property type="entry name" value="Ribosomal_uL22_bac/chlpt-type"/>
</dbReference>
<dbReference type="InterPro" id="IPR047867">
    <property type="entry name" value="Ribosomal_uL22_bac/org-type"/>
</dbReference>
<dbReference type="InterPro" id="IPR018260">
    <property type="entry name" value="Ribosomal_uL22_CS"/>
</dbReference>
<dbReference type="InterPro" id="IPR036394">
    <property type="entry name" value="Ribosomal_uL22_sf"/>
</dbReference>
<dbReference type="NCBIfam" id="TIGR01044">
    <property type="entry name" value="rplV_bact"/>
    <property type="match status" value="1"/>
</dbReference>
<dbReference type="PANTHER" id="PTHR13501">
    <property type="entry name" value="CHLOROPLAST 50S RIBOSOMAL PROTEIN L22-RELATED"/>
    <property type="match status" value="1"/>
</dbReference>
<dbReference type="PANTHER" id="PTHR13501:SF8">
    <property type="entry name" value="LARGE RIBOSOMAL SUBUNIT PROTEIN UL22M"/>
    <property type="match status" value="1"/>
</dbReference>
<dbReference type="Pfam" id="PF00237">
    <property type="entry name" value="Ribosomal_L22"/>
    <property type="match status" value="1"/>
</dbReference>
<dbReference type="SUPFAM" id="SSF54843">
    <property type="entry name" value="Ribosomal protein L22"/>
    <property type="match status" value="1"/>
</dbReference>
<dbReference type="PROSITE" id="PS00464">
    <property type="entry name" value="RIBOSOMAL_L22"/>
    <property type="match status" value="1"/>
</dbReference>
<accession>Q03ZP0</accession>
<evidence type="ECO:0000255" key="1">
    <source>
        <dbReference type="HAMAP-Rule" id="MF_01331"/>
    </source>
</evidence>
<evidence type="ECO:0000305" key="2"/>
<sequence length="118" mass="13108">MAEQVTSARATAKIVRVAPRKARLVLDTIRRKSVNEAYAILKFLPNTSTEDIYKVLNSAVANAENNFSLDREDLIVKEAFANEGPTLKRFRPRAKGSASPINKRTSHLTIVVAEKEAK</sequence>
<reference key="1">
    <citation type="journal article" date="2006" name="Proc. Natl. Acad. Sci. U.S.A.">
        <title>Comparative genomics of the lactic acid bacteria.</title>
        <authorList>
            <person name="Makarova K.S."/>
            <person name="Slesarev A."/>
            <person name="Wolf Y.I."/>
            <person name="Sorokin A."/>
            <person name="Mirkin B."/>
            <person name="Koonin E.V."/>
            <person name="Pavlov A."/>
            <person name="Pavlova N."/>
            <person name="Karamychev V."/>
            <person name="Polouchine N."/>
            <person name="Shakhova V."/>
            <person name="Grigoriev I."/>
            <person name="Lou Y."/>
            <person name="Rohksar D."/>
            <person name="Lucas S."/>
            <person name="Huang K."/>
            <person name="Goodstein D.M."/>
            <person name="Hawkins T."/>
            <person name="Plengvidhya V."/>
            <person name="Welker D."/>
            <person name="Hughes J."/>
            <person name="Goh Y."/>
            <person name="Benson A."/>
            <person name="Baldwin K."/>
            <person name="Lee J.-H."/>
            <person name="Diaz-Muniz I."/>
            <person name="Dosti B."/>
            <person name="Smeianov V."/>
            <person name="Wechter W."/>
            <person name="Barabote R."/>
            <person name="Lorca G."/>
            <person name="Altermann E."/>
            <person name="Barrangou R."/>
            <person name="Ganesan B."/>
            <person name="Xie Y."/>
            <person name="Rawsthorne H."/>
            <person name="Tamir D."/>
            <person name="Parker C."/>
            <person name="Breidt F."/>
            <person name="Broadbent J.R."/>
            <person name="Hutkins R."/>
            <person name="O'Sullivan D."/>
            <person name="Steele J."/>
            <person name="Unlu G."/>
            <person name="Saier M.H. Jr."/>
            <person name="Klaenhammer T."/>
            <person name="Richardson P."/>
            <person name="Kozyavkin S."/>
            <person name="Weimer B.C."/>
            <person name="Mills D.A."/>
        </authorList>
    </citation>
    <scope>NUCLEOTIDE SEQUENCE [LARGE SCALE GENOMIC DNA]</scope>
    <source>
        <strain>ATCC 8293 / DSM 20343 / BCRC 11652 / CCM 1803 / JCM 6124 / NCDO 523 / NBRC 100496 / NCIMB 8023 / NCTC 12954 / NRRL B-1118 / 37Y</strain>
    </source>
</reference>
<comment type="function">
    <text evidence="1">This protein binds specifically to 23S rRNA; its binding is stimulated by other ribosomal proteins, e.g. L4, L17, and L20. It is important during the early stages of 50S assembly. It makes multiple contacts with different domains of the 23S rRNA in the assembled 50S subunit and ribosome (By similarity).</text>
</comment>
<comment type="function">
    <text evidence="1">The globular domain of the protein is located near the polypeptide exit tunnel on the outside of the subunit, while an extended beta-hairpin is found that lines the wall of the exit tunnel in the center of the 70S ribosome.</text>
</comment>
<comment type="subunit">
    <text evidence="1">Part of the 50S ribosomal subunit.</text>
</comment>
<comment type="similarity">
    <text evidence="1">Belongs to the universal ribosomal protein uL22 family.</text>
</comment>
<feature type="chain" id="PRO_1000052599" description="Large ribosomal subunit protein uL22">
    <location>
        <begin position="1"/>
        <end position="118"/>
    </location>
</feature>
<organism>
    <name type="scientific">Leuconostoc mesenteroides subsp. mesenteroides (strain ATCC 8293 / DSM 20343 / BCRC 11652 / CCM 1803 / JCM 6124 / NCDO 523 / NBRC 100496 / NCIMB 8023 / NCTC 12954 / NRRL B-1118 / 37Y)</name>
    <dbReference type="NCBI Taxonomy" id="203120"/>
    <lineage>
        <taxon>Bacteria</taxon>
        <taxon>Bacillati</taxon>
        <taxon>Bacillota</taxon>
        <taxon>Bacilli</taxon>
        <taxon>Lactobacillales</taxon>
        <taxon>Lactobacillaceae</taxon>
        <taxon>Leuconostoc</taxon>
    </lineage>
</organism>
<proteinExistence type="inferred from homology"/>